<name>TAGU_BACCZ</name>
<gene>
    <name evidence="1" type="primary">tagU</name>
    <name type="ordered locus">BCE33L4961</name>
</gene>
<reference key="1">
    <citation type="journal article" date="2006" name="J. Bacteriol.">
        <title>Pathogenomic sequence analysis of Bacillus cereus and Bacillus thuringiensis isolates closely related to Bacillus anthracis.</title>
        <authorList>
            <person name="Han C.S."/>
            <person name="Xie G."/>
            <person name="Challacombe J.F."/>
            <person name="Altherr M.R."/>
            <person name="Bhotika S.S."/>
            <person name="Bruce D."/>
            <person name="Campbell C.S."/>
            <person name="Campbell M.L."/>
            <person name="Chen J."/>
            <person name="Chertkov O."/>
            <person name="Cleland C."/>
            <person name="Dimitrijevic M."/>
            <person name="Doggett N.A."/>
            <person name="Fawcett J.J."/>
            <person name="Glavina T."/>
            <person name="Goodwin L.A."/>
            <person name="Hill K.K."/>
            <person name="Hitchcock P."/>
            <person name="Jackson P.J."/>
            <person name="Keim P."/>
            <person name="Kewalramani A.R."/>
            <person name="Longmire J."/>
            <person name="Lucas S."/>
            <person name="Malfatti S."/>
            <person name="McMurry K."/>
            <person name="Meincke L.J."/>
            <person name="Misra M."/>
            <person name="Moseman B.L."/>
            <person name="Mundt M."/>
            <person name="Munk A.C."/>
            <person name="Okinaka R.T."/>
            <person name="Parson-Quintana B."/>
            <person name="Reilly L.P."/>
            <person name="Richardson P."/>
            <person name="Robinson D.L."/>
            <person name="Rubin E."/>
            <person name="Saunders E."/>
            <person name="Tapia R."/>
            <person name="Tesmer J.G."/>
            <person name="Thayer N."/>
            <person name="Thompson L.S."/>
            <person name="Tice H."/>
            <person name="Ticknor L.O."/>
            <person name="Wills P.L."/>
            <person name="Brettin T.S."/>
            <person name="Gilna P."/>
        </authorList>
    </citation>
    <scope>NUCLEOTIDE SEQUENCE [LARGE SCALE GENOMIC DNA]</scope>
    <source>
        <strain>ZK / E33L</strain>
    </source>
</reference>
<protein>
    <recommendedName>
        <fullName evidence="1">Polyisoprenyl-teichoic acid--peptidoglycan teichoic acid transferase TagU</fullName>
        <ecNumber evidence="1">2.7.8.-</ecNumber>
    </recommendedName>
</protein>
<dbReference type="EC" id="2.7.8.-" evidence="1"/>
<dbReference type="EMBL" id="CP000001">
    <property type="protein sequence ID" value="AAU15319.1"/>
    <property type="molecule type" value="Genomic_DNA"/>
</dbReference>
<dbReference type="RefSeq" id="WP_000727088.1">
    <property type="nucleotide sequence ID" value="NC_006274.1"/>
</dbReference>
<dbReference type="SMR" id="Q630Y6"/>
<dbReference type="KEGG" id="bcz:BCE33L4961"/>
<dbReference type="PATRIC" id="fig|288681.22.peg.388"/>
<dbReference type="Proteomes" id="UP000002612">
    <property type="component" value="Chromosome"/>
</dbReference>
<dbReference type="GO" id="GO:0005886">
    <property type="term" value="C:plasma membrane"/>
    <property type="evidence" value="ECO:0007669"/>
    <property type="project" value="UniProtKB-SubCell"/>
</dbReference>
<dbReference type="GO" id="GO:0016780">
    <property type="term" value="F:phosphotransferase activity, for other substituted phosphate groups"/>
    <property type="evidence" value="ECO:0007669"/>
    <property type="project" value="UniProtKB-UniRule"/>
</dbReference>
<dbReference type="GO" id="GO:0070726">
    <property type="term" value="P:cell wall assembly"/>
    <property type="evidence" value="ECO:0007669"/>
    <property type="project" value="UniProtKB-UniRule"/>
</dbReference>
<dbReference type="FunFam" id="3.40.630.190:FF:000003">
    <property type="entry name" value="Polyisoprenyl-teichoic acid--peptidoglycan teichoic acid transferase TagU"/>
    <property type="match status" value="1"/>
</dbReference>
<dbReference type="Gene3D" id="3.40.630.190">
    <property type="entry name" value="LCP protein"/>
    <property type="match status" value="1"/>
</dbReference>
<dbReference type="HAMAP" id="MF_01140">
    <property type="entry name" value="TagU_transferase"/>
    <property type="match status" value="1"/>
</dbReference>
<dbReference type="InterPro" id="IPR050922">
    <property type="entry name" value="LytR/CpsA/Psr_CW_biosynth"/>
</dbReference>
<dbReference type="InterPro" id="IPR004474">
    <property type="entry name" value="LytR_CpsA_psr"/>
</dbReference>
<dbReference type="InterPro" id="IPR023734">
    <property type="entry name" value="TagU"/>
</dbReference>
<dbReference type="NCBIfam" id="TIGR00350">
    <property type="entry name" value="lytR_cpsA_psr"/>
    <property type="match status" value="1"/>
</dbReference>
<dbReference type="NCBIfam" id="NF006897">
    <property type="entry name" value="PRK09379.1"/>
    <property type="match status" value="1"/>
</dbReference>
<dbReference type="PANTHER" id="PTHR33392">
    <property type="entry name" value="POLYISOPRENYL-TEICHOIC ACID--PEPTIDOGLYCAN TEICHOIC ACID TRANSFERASE TAGU"/>
    <property type="match status" value="1"/>
</dbReference>
<dbReference type="PANTHER" id="PTHR33392:SF6">
    <property type="entry name" value="POLYISOPRENYL-TEICHOIC ACID--PEPTIDOGLYCAN TEICHOIC ACID TRANSFERASE TAGU"/>
    <property type="match status" value="1"/>
</dbReference>
<dbReference type="Pfam" id="PF03816">
    <property type="entry name" value="LytR_cpsA_psr"/>
    <property type="match status" value="1"/>
</dbReference>
<keyword id="KW-1003">Cell membrane</keyword>
<keyword id="KW-0961">Cell wall biogenesis/degradation</keyword>
<keyword id="KW-0472">Membrane</keyword>
<keyword id="KW-0735">Signal-anchor</keyword>
<keyword id="KW-0808">Transferase</keyword>
<keyword id="KW-0812">Transmembrane</keyword>
<keyword id="KW-1133">Transmembrane helix</keyword>
<evidence type="ECO:0000255" key="1">
    <source>
        <dbReference type="HAMAP-Rule" id="MF_01140"/>
    </source>
</evidence>
<sequence length="303" mass="33743">MKKKILFWVLGILGVLIIGGGIYAYNVYSSVSNTLKEVHQPLKRDQNNSNVGEKVSKSEPVSILLLGADERGEDKGRSDSLMVITLNPKNNSMKTVSIPRDTYTEIVGKGKSDKINHAYAFGGVDMSVATVENFLNVPINYYIEVNMEGFKDIVDAVGGVDVKNDLEFTQDGHHFAKGNIHLTGDQALAFTRMRKQDPRGDFGRQMRQRQVMQGVIKKGASFSSLTGYGDVLAAIQKNVKTNLTQDQMFDMQKNYKDCLKNSEDIQIPGDGHKAADGIWYYYVPDAAKQDLTNKLRTHLEVTK</sequence>
<accession>Q630Y6</accession>
<feature type="chain" id="PRO_1000065432" description="Polyisoprenyl-teichoic acid--peptidoglycan teichoic acid transferase TagU">
    <location>
        <begin position="1"/>
        <end position="303"/>
    </location>
</feature>
<feature type="topological domain" description="Cytoplasmic" evidence="1">
    <location>
        <begin position="1"/>
        <end position="4"/>
    </location>
</feature>
<feature type="transmembrane region" description="Helical; Signal-anchor for type II membrane protein" evidence="1">
    <location>
        <begin position="5"/>
        <end position="25"/>
    </location>
</feature>
<feature type="topological domain" description="Extracellular" evidence="1">
    <location>
        <begin position="26"/>
        <end position="303"/>
    </location>
</feature>
<comment type="function">
    <text evidence="1">May catalyze the final step in cell wall teichoic acid biosynthesis, the transfer of the anionic cell wall polymers (APs) from their lipid-linked precursor to the cell wall peptidoglycan (PG).</text>
</comment>
<comment type="pathway">
    <text evidence="1">Cell wall biogenesis.</text>
</comment>
<comment type="subcellular location">
    <subcellularLocation>
        <location evidence="1">Cell membrane</location>
        <topology evidence="1">Single-pass type II membrane protein</topology>
    </subcellularLocation>
</comment>
<comment type="similarity">
    <text evidence="1">Belongs to the LytR/CpsA/Psr (LCP) family.</text>
</comment>
<proteinExistence type="inferred from homology"/>
<organism>
    <name type="scientific">Bacillus cereus (strain ZK / E33L)</name>
    <dbReference type="NCBI Taxonomy" id="288681"/>
    <lineage>
        <taxon>Bacteria</taxon>
        <taxon>Bacillati</taxon>
        <taxon>Bacillota</taxon>
        <taxon>Bacilli</taxon>
        <taxon>Bacillales</taxon>
        <taxon>Bacillaceae</taxon>
        <taxon>Bacillus</taxon>
        <taxon>Bacillus cereus group</taxon>
    </lineage>
</organism>